<dbReference type="EC" id="1.1.1.-" evidence="1"/>
<dbReference type="EMBL" id="CP000854">
    <property type="protein sequence ID" value="ACC40193.1"/>
    <property type="molecule type" value="Genomic_DNA"/>
</dbReference>
<dbReference type="SMR" id="B2HIJ9"/>
<dbReference type="STRING" id="216594.MMAR_1744"/>
<dbReference type="KEGG" id="mmi:MMAR_1744"/>
<dbReference type="eggNOG" id="COG0656">
    <property type="taxonomic scope" value="Bacteria"/>
</dbReference>
<dbReference type="HOGENOM" id="CLU_023205_0_1_11"/>
<dbReference type="Proteomes" id="UP000001190">
    <property type="component" value="Chromosome"/>
</dbReference>
<dbReference type="GO" id="GO:0004033">
    <property type="term" value="F:aldo-keto reductase (NADPH) activity"/>
    <property type="evidence" value="ECO:0007669"/>
    <property type="project" value="TreeGrafter"/>
</dbReference>
<dbReference type="CDD" id="cd19134">
    <property type="entry name" value="AKR_AKR5H1"/>
    <property type="match status" value="1"/>
</dbReference>
<dbReference type="FunFam" id="3.20.20.100:FF:000002">
    <property type="entry name" value="2,5-diketo-D-gluconic acid reductase A"/>
    <property type="match status" value="1"/>
</dbReference>
<dbReference type="Gene3D" id="3.20.20.100">
    <property type="entry name" value="NADP-dependent oxidoreductase domain"/>
    <property type="match status" value="1"/>
</dbReference>
<dbReference type="InterPro" id="IPR020471">
    <property type="entry name" value="AKR"/>
</dbReference>
<dbReference type="InterPro" id="IPR018170">
    <property type="entry name" value="Aldo/ket_reductase_CS"/>
</dbReference>
<dbReference type="InterPro" id="IPR023210">
    <property type="entry name" value="NADP_OxRdtase_dom"/>
</dbReference>
<dbReference type="InterPro" id="IPR036812">
    <property type="entry name" value="NADP_OxRdtase_dom_sf"/>
</dbReference>
<dbReference type="PANTHER" id="PTHR43827">
    <property type="entry name" value="2,5-DIKETO-D-GLUCONIC ACID REDUCTASE"/>
    <property type="match status" value="1"/>
</dbReference>
<dbReference type="PANTHER" id="PTHR43827:SF3">
    <property type="entry name" value="NADP-DEPENDENT OXIDOREDUCTASE DOMAIN-CONTAINING PROTEIN"/>
    <property type="match status" value="1"/>
</dbReference>
<dbReference type="Pfam" id="PF00248">
    <property type="entry name" value="Aldo_ket_red"/>
    <property type="match status" value="1"/>
</dbReference>
<dbReference type="PIRSF" id="PIRSF000097">
    <property type="entry name" value="AKR"/>
    <property type="match status" value="1"/>
</dbReference>
<dbReference type="PRINTS" id="PR00069">
    <property type="entry name" value="ALDKETRDTASE"/>
</dbReference>
<dbReference type="SUPFAM" id="SSF51430">
    <property type="entry name" value="NAD(P)-linked oxidoreductase"/>
    <property type="match status" value="1"/>
</dbReference>
<dbReference type="PROSITE" id="PS00062">
    <property type="entry name" value="ALDOKETO_REDUCTASE_2"/>
    <property type="match status" value="1"/>
</dbReference>
<reference key="1">
    <citation type="journal article" date="2008" name="Genome Res.">
        <title>Insights from the complete genome sequence of Mycobacterium marinum on the evolution of Mycobacterium tuberculosis.</title>
        <authorList>
            <person name="Stinear T.P."/>
            <person name="Seemann T."/>
            <person name="Harrison P.F."/>
            <person name="Jenkin G.A."/>
            <person name="Davies J.K."/>
            <person name="Johnson P.D."/>
            <person name="Abdellah Z."/>
            <person name="Arrowsmith C."/>
            <person name="Chillingworth T."/>
            <person name="Churcher C."/>
            <person name="Clarke K."/>
            <person name="Cronin A."/>
            <person name="Davis P."/>
            <person name="Goodhead I."/>
            <person name="Holroyd N."/>
            <person name="Jagels K."/>
            <person name="Lord A."/>
            <person name="Moule S."/>
            <person name="Mungall K."/>
            <person name="Norbertczak H."/>
            <person name="Quail M.A."/>
            <person name="Rabbinowitsch E."/>
            <person name="Walker D."/>
            <person name="White B."/>
            <person name="Whitehead S."/>
            <person name="Small P.L."/>
            <person name="Brosch R."/>
            <person name="Ramakrishnan L."/>
            <person name="Fischbach M.A."/>
            <person name="Parkhill J."/>
            <person name="Cole S.T."/>
        </authorList>
    </citation>
    <scope>NUCLEOTIDE SEQUENCE [LARGE SCALE GENOMIC DNA]</scope>
    <source>
        <strain>ATCC BAA-535 / M</strain>
    </source>
</reference>
<protein>
    <recommendedName>
        <fullName evidence="1">Aldo-keto reductase MMAR_1744</fullName>
        <ecNumber evidence="1">1.1.1.-</ecNumber>
    </recommendedName>
</protein>
<gene>
    <name type="ordered locus">MMAR_1744</name>
</gene>
<accession>B2HIJ9</accession>
<comment type="similarity">
    <text evidence="3">Belongs to the aldo/keto reductase family.</text>
</comment>
<evidence type="ECO:0000250" key="1">
    <source>
        <dbReference type="UniProtKB" id="A0QV09"/>
    </source>
</evidence>
<evidence type="ECO:0000250" key="2">
    <source>
        <dbReference type="UniProtKB" id="P80874"/>
    </source>
</evidence>
<evidence type="ECO:0000305" key="3"/>
<feature type="chain" id="PRO_0000380737" description="Aldo-keto reductase MMAR_1744">
    <location>
        <begin position="1"/>
        <end position="281"/>
    </location>
</feature>
<feature type="active site" description="Proton donor" evidence="2">
    <location>
        <position position="56"/>
    </location>
</feature>
<feature type="binding site" evidence="1">
    <location>
        <position position="196"/>
    </location>
    <ligand>
        <name>NADPH</name>
        <dbReference type="ChEBI" id="CHEBI:57783"/>
    </ligand>
</feature>
<feature type="binding site" evidence="1">
    <location>
        <position position="234"/>
    </location>
    <ligand>
        <name>NADPH</name>
        <dbReference type="ChEBI" id="CHEBI:57783"/>
    </ligand>
</feature>
<feature type="binding site" evidence="1">
    <location>
        <position position="237"/>
    </location>
    <ligand>
        <name>NADPH</name>
        <dbReference type="ChEBI" id="CHEBI:57783"/>
    </ligand>
</feature>
<feature type="binding site" evidence="1">
    <location>
        <position position="245"/>
    </location>
    <ligand>
        <name>NADPH</name>
        <dbReference type="ChEBI" id="CHEBI:57783"/>
    </ligand>
</feature>
<feature type="binding site" evidence="1">
    <location>
        <position position="246"/>
    </location>
    <ligand>
        <name>NADPH</name>
        <dbReference type="ChEBI" id="CHEBI:57783"/>
    </ligand>
</feature>
<feature type="binding site" evidence="1">
    <location>
        <position position="272"/>
    </location>
    <ligand>
        <name>NADPH</name>
        <dbReference type="ChEBI" id="CHEBI:57783"/>
    </ligand>
</feature>
<proteinExistence type="inferred from homology"/>
<organism>
    <name type="scientific">Mycobacterium marinum (strain ATCC BAA-535 / M)</name>
    <dbReference type="NCBI Taxonomy" id="216594"/>
    <lineage>
        <taxon>Bacteria</taxon>
        <taxon>Bacillati</taxon>
        <taxon>Actinomycetota</taxon>
        <taxon>Actinomycetes</taxon>
        <taxon>Mycobacteriales</taxon>
        <taxon>Mycobacteriaceae</taxon>
        <taxon>Mycobacterium</taxon>
        <taxon>Mycobacterium ulcerans group</taxon>
    </lineage>
</organism>
<name>Y1744_MYCMM</name>
<keyword id="KW-0521">NADP</keyword>
<keyword id="KW-0560">Oxidoreductase</keyword>
<keyword id="KW-1185">Reference proteome</keyword>
<sequence>MPGAPSPSAPSIALNDENTMPVLGMGVAGLSDDETERAVSAALEIGCRLIDTAAAYGNEAAVGRAIAASGIPRAELFVTTKVATADHGFTASREACKASLDRLGLDYVDLYLIHWPAPAAGKYVDAFGGLIQARGEGFTRSIGVSNFTEEHVSNVIDLTFVTPAVNQVELHPLLNQDELRKANAQHNVVTQSYTPLALGQLADNPTVTSIAGEYGKTPTQVLLRWNLQLGNAVIFGSSNAEHIATNLDVFEFELASQHMDAINGLNDGTRLREDPMTFAGV</sequence>